<comment type="function">
    <text evidence="3 4 5">Catalyzes the 6 alpha hydroxylation oxidation of taurodeoxycholate to produce the pig specific bile acid taurohyocholic acid.</text>
</comment>
<comment type="catalytic activity">
    <reaction evidence="3 4">
        <text>taurochenodeoxycholate + reduced [NADPH--hemoprotein reductase] + O2 = taurohyocholate + oxidized [NADPH--hemoprotein reductase] + H2O + H(+)</text>
        <dbReference type="Rhea" id="RHEA:17857"/>
        <dbReference type="Rhea" id="RHEA-COMP:11964"/>
        <dbReference type="Rhea" id="RHEA-COMP:11965"/>
        <dbReference type="ChEBI" id="CHEBI:9407"/>
        <dbReference type="ChEBI" id="CHEBI:15377"/>
        <dbReference type="ChEBI" id="CHEBI:15378"/>
        <dbReference type="ChEBI" id="CHEBI:15379"/>
        <dbReference type="ChEBI" id="CHEBI:57618"/>
        <dbReference type="ChEBI" id="CHEBI:58210"/>
        <dbReference type="ChEBI" id="CHEBI:58874"/>
        <dbReference type="EC" id="1.14.14.57"/>
    </reaction>
</comment>
<comment type="catalytic activity">
    <reaction evidence="3 4">
        <text>lithocholate + reduced [NADPH--hemoprotein reductase] + O2 = hyodeoxycholate + oxidized [NADPH--hemoprotein reductase] + H2O + H(+)</text>
        <dbReference type="Rhea" id="RHEA:23644"/>
        <dbReference type="Rhea" id="RHEA-COMP:11964"/>
        <dbReference type="Rhea" id="RHEA-COMP:11965"/>
        <dbReference type="ChEBI" id="CHEBI:15377"/>
        <dbReference type="ChEBI" id="CHEBI:15378"/>
        <dbReference type="ChEBI" id="CHEBI:15379"/>
        <dbReference type="ChEBI" id="CHEBI:29744"/>
        <dbReference type="ChEBI" id="CHEBI:57618"/>
        <dbReference type="ChEBI" id="CHEBI:58210"/>
        <dbReference type="ChEBI" id="CHEBI:58875"/>
        <dbReference type="EC" id="1.14.14.57"/>
    </reaction>
</comment>
<comment type="cofactor">
    <cofactor evidence="1">
        <name>heme</name>
        <dbReference type="ChEBI" id="CHEBI:30413"/>
    </cofactor>
</comment>
<comment type="subcellular location">
    <subcellularLocation>
        <location evidence="6">Endoplasmic reticulum membrane</location>
        <topology evidence="6">Multi-pass membrane protein</topology>
    </subcellularLocation>
</comment>
<comment type="tissue specificity">
    <text evidence="3">Primarily expressed in liver. Low expression in kidney.</text>
</comment>
<comment type="similarity">
    <text evidence="6">Belongs to the cytochrome P450 family.</text>
</comment>
<dbReference type="EC" id="1.14.14.57" evidence="3 4"/>
<dbReference type="EMBL" id="AJ278474">
    <property type="protein sequence ID" value="CAC19358.1"/>
    <property type="molecule type" value="mRNA"/>
</dbReference>
<dbReference type="EMBL" id="AJ586859">
    <property type="protein sequence ID" value="CAE52546.1"/>
    <property type="molecule type" value="Genomic_DNA"/>
</dbReference>
<dbReference type="EMBL" id="AJ586618">
    <property type="protein sequence ID" value="CAE52532.1"/>
    <property type="molecule type" value="Genomic_DNA"/>
</dbReference>
<dbReference type="RefSeq" id="NP_999590.1">
    <property type="nucleotide sequence ID" value="NM_214425.1"/>
</dbReference>
<dbReference type="SMR" id="Q9GJX5"/>
<dbReference type="FunCoup" id="Q9GJX5">
    <property type="interactions" value="12"/>
</dbReference>
<dbReference type="PaxDb" id="9823-ENSSSCP00000004207"/>
<dbReference type="PeptideAtlas" id="Q9GJX5"/>
<dbReference type="GeneID" id="403327"/>
<dbReference type="KEGG" id="ssc:403327"/>
<dbReference type="CTD" id="403327"/>
<dbReference type="eggNOG" id="KOG0157">
    <property type="taxonomic scope" value="Eukaryota"/>
</dbReference>
<dbReference type="InParanoid" id="Q9GJX5"/>
<dbReference type="OrthoDB" id="1470350at2759"/>
<dbReference type="BRENDA" id="1.14.14.57">
    <property type="organism ID" value="6170"/>
</dbReference>
<dbReference type="Proteomes" id="UP000008227">
    <property type="component" value="Chromosome 6"/>
</dbReference>
<dbReference type="Proteomes" id="UP000314985">
    <property type="component" value="Unplaced"/>
</dbReference>
<dbReference type="Proteomes" id="UP000694570">
    <property type="component" value="Unplaced"/>
</dbReference>
<dbReference type="Proteomes" id="UP000694571">
    <property type="component" value="Unplaced"/>
</dbReference>
<dbReference type="Proteomes" id="UP000694720">
    <property type="component" value="Unplaced"/>
</dbReference>
<dbReference type="Proteomes" id="UP000694722">
    <property type="component" value="Unplaced"/>
</dbReference>
<dbReference type="Proteomes" id="UP000694723">
    <property type="component" value="Unplaced"/>
</dbReference>
<dbReference type="Proteomes" id="UP000694724">
    <property type="component" value="Unplaced"/>
</dbReference>
<dbReference type="Proteomes" id="UP000694725">
    <property type="component" value="Unplaced"/>
</dbReference>
<dbReference type="Proteomes" id="UP000694726">
    <property type="component" value="Unplaced"/>
</dbReference>
<dbReference type="Proteomes" id="UP000694727">
    <property type="component" value="Unplaced"/>
</dbReference>
<dbReference type="Proteomes" id="UP000694728">
    <property type="component" value="Unplaced"/>
</dbReference>
<dbReference type="Bgee" id="ENSSSCG00000003891">
    <property type="expression patterns" value="Expressed in adult mammalian kidney and 20 other cell types or tissues"/>
</dbReference>
<dbReference type="GO" id="GO:0005789">
    <property type="term" value="C:endoplasmic reticulum membrane"/>
    <property type="evidence" value="ECO:0007669"/>
    <property type="project" value="UniProtKB-SubCell"/>
</dbReference>
<dbReference type="GO" id="GO:0020037">
    <property type="term" value="F:heme binding"/>
    <property type="evidence" value="ECO:0007669"/>
    <property type="project" value="InterPro"/>
</dbReference>
<dbReference type="GO" id="GO:0005506">
    <property type="term" value="F:iron ion binding"/>
    <property type="evidence" value="ECO:0007669"/>
    <property type="project" value="InterPro"/>
</dbReference>
<dbReference type="GO" id="GO:0033780">
    <property type="term" value="F:taurochenodeoxycholate 6alpha-hydroxylase activity"/>
    <property type="evidence" value="ECO:0007669"/>
    <property type="project" value="UniProtKB-EC"/>
</dbReference>
<dbReference type="GO" id="GO:0006629">
    <property type="term" value="P:lipid metabolic process"/>
    <property type="evidence" value="ECO:0007669"/>
    <property type="project" value="UniProtKB-ARBA"/>
</dbReference>
<dbReference type="CDD" id="cd20678">
    <property type="entry name" value="CYP4B-like"/>
    <property type="match status" value="1"/>
</dbReference>
<dbReference type="FunFam" id="1.10.630.10:FF:000005">
    <property type="entry name" value="cytochrome P450 4F22 isoform X2"/>
    <property type="match status" value="1"/>
</dbReference>
<dbReference type="Gene3D" id="1.10.630.10">
    <property type="entry name" value="Cytochrome P450"/>
    <property type="match status" value="1"/>
</dbReference>
<dbReference type="InterPro" id="IPR001128">
    <property type="entry name" value="Cyt_P450"/>
</dbReference>
<dbReference type="InterPro" id="IPR017972">
    <property type="entry name" value="Cyt_P450_CS"/>
</dbReference>
<dbReference type="InterPro" id="IPR002401">
    <property type="entry name" value="Cyt_P450_E_grp-I"/>
</dbReference>
<dbReference type="InterPro" id="IPR036396">
    <property type="entry name" value="Cyt_P450_sf"/>
</dbReference>
<dbReference type="InterPro" id="IPR050196">
    <property type="entry name" value="Cytochrome_P450_Monoox"/>
</dbReference>
<dbReference type="PANTHER" id="PTHR24291:SF39">
    <property type="entry name" value="CYTOCHROME P450 4A11-RELATED"/>
    <property type="match status" value="1"/>
</dbReference>
<dbReference type="PANTHER" id="PTHR24291">
    <property type="entry name" value="CYTOCHROME P450 FAMILY 4"/>
    <property type="match status" value="1"/>
</dbReference>
<dbReference type="Pfam" id="PF00067">
    <property type="entry name" value="p450"/>
    <property type="match status" value="1"/>
</dbReference>
<dbReference type="PRINTS" id="PR00463">
    <property type="entry name" value="EP450I"/>
</dbReference>
<dbReference type="PRINTS" id="PR00385">
    <property type="entry name" value="P450"/>
</dbReference>
<dbReference type="SUPFAM" id="SSF48264">
    <property type="entry name" value="Cytochrome P450"/>
    <property type="match status" value="1"/>
</dbReference>
<dbReference type="PROSITE" id="PS00086">
    <property type="entry name" value="CYTOCHROME_P450"/>
    <property type="match status" value="1"/>
</dbReference>
<sequence>MTVPALASVSGLLQVASLLGLLLLLLKAAQLYLRRQWLLKALQQFPSPPSHWLYGHSREFQEESELQPLLKRVEKYPSACARWLWGTRAMVLVYDPDYMKVVLARSEPKAPVLYRLLIPWIGCGLLLLNGQMWFQRRRMLTPAFHYDILKPYVGLMAKSVQVMLDKWEQLVAQDPRLEIVGPVSLMTLDTIMKCAFSHQGSAQTDGDSQSYIQAIWDLKNLIFSRLRSAFLQNDIIYRLSPEGRQCQRACQKVHQHTDRVIQLRKTHLQKEGEMENVKKKRHLDFLDILLFARMENGNSLSDTDVRAEVDTFMAAGHDSTASGISWVLYALASNPEHQQRCREEIQGLLGDGTSITWDHLDQMPYTTMCIKEALRLYPPVPSVGRELSKPITFPDGRSLPAGIILSLSIYGLHHNPQVWPNPEEFDPSRFAPGSARHSHAFMPFSGGSRNCIGKQFAMNEMKVVVALTLLRFELAPDPSRIPVPIQGIVLKSKNGIHLNLRKIP</sequence>
<feature type="initiator methionine" description="Removed" evidence="5">
    <location>
        <position position="1"/>
    </location>
</feature>
<feature type="chain" id="PRO_0000280742" description="Taurochenodeoxycholic 6 alpha-hydroxylase">
    <location>
        <begin position="2"/>
        <end position="504"/>
    </location>
</feature>
<feature type="transmembrane region" description="Helical" evidence="2">
    <location>
        <begin position="6"/>
        <end position="26"/>
    </location>
</feature>
<feature type="transmembrane region" description="Helical" evidence="2">
    <location>
        <begin position="110"/>
        <end position="130"/>
    </location>
</feature>
<feature type="binding site" description="axial binding residue" evidence="1">
    <location>
        <position position="451"/>
    </location>
    <ligand>
        <name>heme</name>
        <dbReference type="ChEBI" id="CHEBI:30413"/>
    </ligand>
    <ligandPart>
        <name>Fe</name>
        <dbReference type="ChEBI" id="CHEBI:18248"/>
    </ligandPart>
</feature>
<feature type="mutagenesis site" description="Complete loss of activity." evidence="3">
    <original>AAGHDS</original>
    <variation>FEGHDT</variation>
    <location>
        <begin position="314"/>
        <end position="319"/>
    </location>
</feature>
<feature type="sequence conflict" description="In Ref. 2; CAE52532." evidence="6" ref="2">
    <original>Q</original>
    <variation>P</variation>
    <location>
        <position position="135"/>
    </location>
</feature>
<accession>Q9GJX5</accession>
<accession>Q70BW2</accession>
<accession>Q70BZ7</accession>
<keyword id="KW-0903">Direct protein sequencing</keyword>
<keyword id="KW-0256">Endoplasmic reticulum</keyword>
<keyword id="KW-0349">Heme</keyword>
<keyword id="KW-0408">Iron</keyword>
<keyword id="KW-0472">Membrane</keyword>
<keyword id="KW-0479">Metal-binding</keyword>
<keyword id="KW-0503">Monooxygenase</keyword>
<keyword id="KW-0521">NADP</keyword>
<keyword id="KW-0560">Oxidoreductase</keyword>
<keyword id="KW-1185">Reference proteome</keyword>
<keyword id="KW-0812">Transmembrane</keyword>
<keyword id="KW-1133">Transmembrane helix</keyword>
<name>CP4AL_PIG</name>
<organism>
    <name type="scientific">Sus scrofa</name>
    <name type="common">Pig</name>
    <dbReference type="NCBI Taxonomy" id="9823"/>
    <lineage>
        <taxon>Eukaryota</taxon>
        <taxon>Metazoa</taxon>
        <taxon>Chordata</taxon>
        <taxon>Craniata</taxon>
        <taxon>Vertebrata</taxon>
        <taxon>Euteleostomi</taxon>
        <taxon>Mammalia</taxon>
        <taxon>Eutheria</taxon>
        <taxon>Laurasiatheria</taxon>
        <taxon>Artiodactyla</taxon>
        <taxon>Suina</taxon>
        <taxon>Suidae</taxon>
        <taxon>Sus</taxon>
    </lineage>
</organism>
<evidence type="ECO:0000250" key="1"/>
<evidence type="ECO:0000255" key="2"/>
<evidence type="ECO:0000269" key="3">
    <source>
    </source>
</evidence>
<evidence type="ECO:0000269" key="4">
    <source>
    </source>
</evidence>
<evidence type="ECO:0000269" key="5">
    <source>
    </source>
</evidence>
<evidence type="ECO:0000305" key="6"/>
<protein>
    <recommendedName>
        <fullName>Taurochenodeoxycholic 6 alpha-hydroxylase</fullName>
        <ecNumber evidence="3 4">1.14.14.57</ecNumber>
    </recommendedName>
    <alternativeName>
        <fullName>CYPIVA21</fullName>
    </alternativeName>
    <alternativeName>
        <fullName>Cytochrome P450 4A21</fullName>
    </alternativeName>
</protein>
<reference key="1">
    <citation type="journal article" date="2001" name="J. Biol. Chem.">
        <title>Cloning and expression of a pig liver taurochenodeoxycholic acid 6alpha-hydroxylase (CYP4A21): a novel member of the CYP4A subfamily.</title>
        <authorList>
            <person name="Lundell K."/>
            <person name="Hansson R."/>
            <person name="Wikvall K."/>
        </authorList>
    </citation>
    <scope>NUCLEOTIDE SEQUENCE [MRNA]</scope>
    <scope>TISSUE SPECIFICITY</scope>
    <scope>FUNCTION</scope>
    <scope>CATALYTIC ACTIVITY</scope>
    <scope>MUTAGENESIS OF 314-ALA--SER-319</scope>
    <source>
        <tissue>Liver</tissue>
    </source>
</reference>
<reference key="2">
    <citation type="journal article" date="2004" name="Biochem. J.">
        <title>The porcine taurochenodeoxycholic acid 6alpha-hydroxylase (CYP4A21) gene: evolution by gene duplication and gene conversion.</title>
        <authorList>
            <person name="Lundell K."/>
        </authorList>
    </citation>
    <scope>NUCLEOTIDE SEQUENCE [GENOMIC DNA] OF 1-42 AND 83-504</scope>
</reference>
<reference key="3">
    <citation type="journal article" date="1995" name="Eur. J. Biochem.">
        <title>Characterisation of taurochenodeoxycholic acid 6 alpha-hydroxylase from pig liver microsomes.</title>
        <authorList>
            <person name="Araya Z."/>
            <person name="Hellman U."/>
            <person name="Hansson R."/>
        </authorList>
    </citation>
    <scope>PROTEIN SEQUENCE OF 2-21; 59-71; 83-88; 228-238; 430-449 AND 472-480</scope>
    <scope>FUNCTION</scope>
</reference>
<reference key="4">
    <citation type="journal article" date="1986" name="J. Lipid Res.">
        <title>Characterization of 6 alpha-hydroxylation of taurochenodeoxycholic acid in pig liver.</title>
        <authorList>
            <person name="Bostroem H."/>
        </authorList>
    </citation>
    <scope>FUNCTION</scope>
    <scope>CATALYTIC ACTIVITY</scope>
    <source>
        <tissue>Liver</tissue>
    </source>
</reference>
<proteinExistence type="evidence at protein level"/>
<gene>
    <name type="primary">CYP4A21</name>
</gene>